<protein>
    <recommendedName>
        <fullName>MLP-like protein 31</fullName>
    </recommendedName>
</protein>
<name>MLP31_ARATH</name>
<comment type="similarity">
    <text evidence="1">Belongs to the MLP family.</text>
</comment>
<comment type="sequence caution" evidence="1">
    <conflict type="erroneous initiation">
        <sequence resource="EMBL-CDS" id="AAD55499"/>
    </conflict>
</comment>
<accession>Q941R6</accession>
<accession>Q8RXL9</accession>
<accession>Q9SSK8</accession>
<organism>
    <name type="scientific">Arabidopsis thaliana</name>
    <name type="common">Mouse-ear cress</name>
    <dbReference type="NCBI Taxonomy" id="3702"/>
    <lineage>
        <taxon>Eukaryota</taxon>
        <taxon>Viridiplantae</taxon>
        <taxon>Streptophyta</taxon>
        <taxon>Embryophyta</taxon>
        <taxon>Tracheophyta</taxon>
        <taxon>Spermatophyta</taxon>
        <taxon>Magnoliopsida</taxon>
        <taxon>eudicotyledons</taxon>
        <taxon>Gunneridae</taxon>
        <taxon>Pentapetalae</taxon>
        <taxon>rosids</taxon>
        <taxon>malvids</taxon>
        <taxon>Brassicales</taxon>
        <taxon>Brassicaceae</taxon>
        <taxon>Camelineae</taxon>
        <taxon>Arabidopsis</taxon>
    </lineage>
</organism>
<gene>
    <name type="primary">MLP31</name>
    <name type="ordered locus">At1g70840</name>
    <name type="ORF">F15H11.9</name>
</gene>
<sequence>MATKMAGAAMNLAKRESSSLCGKLETDIEIKASAGKFHHMFAGRPHHVSKATPGKIQGCELHEGDWGKVGSIVFWNYVHDGEAKVAKERIEAVEPEKNLITFRVIEGDLLKEYKSFVITIQVTPKRGGPGSVVHWHVEYEKIDDKVAHPETFLDFCVEVSKEIDEHLLNEE</sequence>
<keyword id="KW-1185">Reference proteome</keyword>
<proteinExistence type="evidence at transcript level"/>
<dbReference type="EMBL" id="AC008148">
    <property type="protein sequence ID" value="AAD55499.1"/>
    <property type="status" value="ALT_INIT"/>
    <property type="molecule type" value="Genomic_DNA"/>
</dbReference>
<dbReference type="EMBL" id="CP002684">
    <property type="protein sequence ID" value="AEE35126.1"/>
    <property type="molecule type" value="Genomic_DNA"/>
</dbReference>
<dbReference type="EMBL" id="AY080814">
    <property type="protein sequence ID" value="AAL87294.1"/>
    <property type="molecule type" value="mRNA"/>
</dbReference>
<dbReference type="EMBL" id="AY123010">
    <property type="protein sequence ID" value="AAM67543.1"/>
    <property type="molecule type" value="mRNA"/>
</dbReference>
<dbReference type="EMBL" id="AK226451">
    <property type="protein sequence ID" value="BAE98593.1"/>
    <property type="molecule type" value="mRNA"/>
</dbReference>
<dbReference type="EMBL" id="AJ306142">
    <property type="protein sequence ID" value="CAC83580.1"/>
    <property type="molecule type" value="Genomic_DNA"/>
</dbReference>
<dbReference type="PIR" id="B96733">
    <property type="entry name" value="B96733"/>
</dbReference>
<dbReference type="RefSeq" id="NP_177241.3">
    <property type="nucleotide sequence ID" value="NM_105752.4"/>
</dbReference>
<dbReference type="SMR" id="Q941R6"/>
<dbReference type="BioGRID" id="28641">
    <property type="interactions" value="1"/>
</dbReference>
<dbReference type="FunCoup" id="Q941R6">
    <property type="interactions" value="17"/>
</dbReference>
<dbReference type="STRING" id="3702.Q941R6"/>
<dbReference type="GlyGen" id="Q941R6">
    <property type="glycosylation" value="1 site"/>
</dbReference>
<dbReference type="PaxDb" id="3702-AT1G70840.1"/>
<dbReference type="ProteomicsDB" id="250935"/>
<dbReference type="EnsemblPlants" id="AT1G70840.1">
    <property type="protein sequence ID" value="AT1G70840.1"/>
    <property type="gene ID" value="AT1G70840"/>
</dbReference>
<dbReference type="GeneID" id="843421"/>
<dbReference type="Gramene" id="AT1G70840.1">
    <property type="protein sequence ID" value="AT1G70840.1"/>
    <property type="gene ID" value="AT1G70840"/>
</dbReference>
<dbReference type="KEGG" id="ath:AT1G70840"/>
<dbReference type="Araport" id="AT1G70840"/>
<dbReference type="TAIR" id="AT1G70840">
    <property type="gene designation" value="MLP31"/>
</dbReference>
<dbReference type="eggNOG" id="ENOG502RN75">
    <property type="taxonomic scope" value="Eukaryota"/>
</dbReference>
<dbReference type="HOGENOM" id="CLU_081988_1_0_1"/>
<dbReference type="InParanoid" id="Q941R6"/>
<dbReference type="OMA" id="ELHEGNW"/>
<dbReference type="PhylomeDB" id="Q941R6"/>
<dbReference type="PRO" id="PR:Q941R6"/>
<dbReference type="Proteomes" id="UP000006548">
    <property type="component" value="Chromosome 1"/>
</dbReference>
<dbReference type="ExpressionAtlas" id="Q941R6">
    <property type="expression patterns" value="baseline and differential"/>
</dbReference>
<dbReference type="GO" id="GO:0006952">
    <property type="term" value="P:defense response"/>
    <property type="evidence" value="ECO:0007669"/>
    <property type="project" value="InterPro"/>
</dbReference>
<dbReference type="CDD" id="cd07816">
    <property type="entry name" value="Bet_v1-like"/>
    <property type="match status" value="1"/>
</dbReference>
<dbReference type="Gene3D" id="3.30.530.20">
    <property type="match status" value="1"/>
</dbReference>
<dbReference type="InterPro" id="IPR000916">
    <property type="entry name" value="Bet_v_I/MLP"/>
</dbReference>
<dbReference type="InterPro" id="IPR051761">
    <property type="entry name" value="MLP-like_ligand-binding"/>
</dbReference>
<dbReference type="InterPro" id="IPR023393">
    <property type="entry name" value="START-like_dom_sf"/>
</dbReference>
<dbReference type="PANTHER" id="PTHR31907">
    <property type="entry name" value="MLP-LIKE PROTEIN 423"/>
    <property type="match status" value="1"/>
</dbReference>
<dbReference type="Pfam" id="PF00407">
    <property type="entry name" value="Bet_v_1"/>
    <property type="match status" value="1"/>
</dbReference>
<dbReference type="SMART" id="SM01037">
    <property type="entry name" value="Bet_v_1"/>
    <property type="match status" value="1"/>
</dbReference>
<dbReference type="SUPFAM" id="SSF55961">
    <property type="entry name" value="Bet v1-like"/>
    <property type="match status" value="1"/>
</dbReference>
<evidence type="ECO:0000305" key="1"/>
<feature type="chain" id="PRO_0000210069" description="MLP-like protein 31">
    <location>
        <begin position="1"/>
        <end position="171"/>
    </location>
</feature>
<reference key="1">
    <citation type="journal article" date="2000" name="Nature">
        <title>Sequence and analysis of chromosome 1 of the plant Arabidopsis thaliana.</title>
        <authorList>
            <person name="Theologis A."/>
            <person name="Ecker J.R."/>
            <person name="Palm C.J."/>
            <person name="Federspiel N.A."/>
            <person name="Kaul S."/>
            <person name="White O."/>
            <person name="Alonso J."/>
            <person name="Altafi H."/>
            <person name="Araujo R."/>
            <person name="Bowman C.L."/>
            <person name="Brooks S.Y."/>
            <person name="Buehler E."/>
            <person name="Chan A."/>
            <person name="Chao Q."/>
            <person name="Chen H."/>
            <person name="Cheuk R.F."/>
            <person name="Chin C.W."/>
            <person name="Chung M.K."/>
            <person name="Conn L."/>
            <person name="Conway A.B."/>
            <person name="Conway A.R."/>
            <person name="Creasy T.H."/>
            <person name="Dewar K."/>
            <person name="Dunn P."/>
            <person name="Etgu P."/>
            <person name="Feldblyum T.V."/>
            <person name="Feng J.-D."/>
            <person name="Fong B."/>
            <person name="Fujii C.Y."/>
            <person name="Gill J.E."/>
            <person name="Goldsmith A.D."/>
            <person name="Haas B."/>
            <person name="Hansen N.F."/>
            <person name="Hughes B."/>
            <person name="Huizar L."/>
            <person name="Hunter J.L."/>
            <person name="Jenkins J."/>
            <person name="Johnson-Hopson C."/>
            <person name="Khan S."/>
            <person name="Khaykin E."/>
            <person name="Kim C.J."/>
            <person name="Koo H.L."/>
            <person name="Kremenetskaia I."/>
            <person name="Kurtz D.B."/>
            <person name="Kwan A."/>
            <person name="Lam B."/>
            <person name="Langin-Hooper S."/>
            <person name="Lee A."/>
            <person name="Lee J.M."/>
            <person name="Lenz C.A."/>
            <person name="Li J.H."/>
            <person name="Li Y.-P."/>
            <person name="Lin X."/>
            <person name="Liu S.X."/>
            <person name="Liu Z.A."/>
            <person name="Luros J.S."/>
            <person name="Maiti R."/>
            <person name="Marziali A."/>
            <person name="Militscher J."/>
            <person name="Miranda M."/>
            <person name="Nguyen M."/>
            <person name="Nierman W.C."/>
            <person name="Osborne B.I."/>
            <person name="Pai G."/>
            <person name="Peterson J."/>
            <person name="Pham P.K."/>
            <person name="Rizzo M."/>
            <person name="Rooney T."/>
            <person name="Rowley D."/>
            <person name="Sakano H."/>
            <person name="Salzberg S.L."/>
            <person name="Schwartz J.R."/>
            <person name="Shinn P."/>
            <person name="Southwick A.M."/>
            <person name="Sun H."/>
            <person name="Tallon L.J."/>
            <person name="Tambunga G."/>
            <person name="Toriumi M.J."/>
            <person name="Town C.D."/>
            <person name="Utterback T."/>
            <person name="Van Aken S."/>
            <person name="Vaysberg M."/>
            <person name="Vysotskaia V.S."/>
            <person name="Walker M."/>
            <person name="Wu D."/>
            <person name="Yu G."/>
            <person name="Fraser C.M."/>
            <person name="Venter J.C."/>
            <person name="Davis R.W."/>
        </authorList>
    </citation>
    <scope>NUCLEOTIDE SEQUENCE [LARGE SCALE GENOMIC DNA]</scope>
    <source>
        <strain>cv. Columbia</strain>
    </source>
</reference>
<reference key="2">
    <citation type="journal article" date="2017" name="Plant J.">
        <title>Araport11: a complete reannotation of the Arabidopsis thaliana reference genome.</title>
        <authorList>
            <person name="Cheng C.Y."/>
            <person name="Krishnakumar V."/>
            <person name="Chan A.P."/>
            <person name="Thibaud-Nissen F."/>
            <person name="Schobel S."/>
            <person name="Town C.D."/>
        </authorList>
    </citation>
    <scope>GENOME REANNOTATION</scope>
    <source>
        <strain>cv. Columbia</strain>
    </source>
</reference>
<reference key="3">
    <citation type="journal article" date="2003" name="Science">
        <title>Empirical analysis of transcriptional activity in the Arabidopsis genome.</title>
        <authorList>
            <person name="Yamada K."/>
            <person name="Lim J."/>
            <person name="Dale J.M."/>
            <person name="Chen H."/>
            <person name="Shinn P."/>
            <person name="Palm C.J."/>
            <person name="Southwick A.M."/>
            <person name="Wu H.C."/>
            <person name="Kim C.J."/>
            <person name="Nguyen M."/>
            <person name="Pham P.K."/>
            <person name="Cheuk R.F."/>
            <person name="Karlin-Newmann G."/>
            <person name="Liu S.X."/>
            <person name="Lam B."/>
            <person name="Sakano H."/>
            <person name="Wu T."/>
            <person name="Yu G."/>
            <person name="Miranda M."/>
            <person name="Quach H.L."/>
            <person name="Tripp M."/>
            <person name="Chang C.H."/>
            <person name="Lee J.M."/>
            <person name="Toriumi M.J."/>
            <person name="Chan M.M."/>
            <person name="Tang C.C."/>
            <person name="Onodera C.S."/>
            <person name="Deng J.M."/>
            <person name="Akiyama K."/>
            <person name="Ansari Y."/>
            <person name="Arakawa T."/>
            <person name="Banh J."/>
            <person name="Banno F."/>
            <person name="Bowser L."/>
            <person name="Brooks S.Y."/>
            <person name="Carninci P."/>
            <person name="Chao Q."/>
            <person name="Choy N."/>
            <person name="Enju A."/>
            <person name="Goldsmith A.D."/>
            <person name="Gurjal M."/>
            <person name="Hansen N.F."/>
            <person name="Hayashizaki Y."/>
            <person name="Johnson-Hopson C."/>
            <person name="Hsuan V.W."/>
            <person name="Iida K."/>
            <person name="Karnes M."/>
            <person name="Khan S."/>
            <person name="Koesema E."/>
            <person name="Ishida J."/>
            <person name="Jiang P.X."/>
            <person name="Jones T."/>
            <person name="Kawai J."/>
            <person name="Kamiya A."/>
            <person name="Meyers C."/>
            <person name="Nakajima M."/>
            <person name="Narusaka M."/>
            <person name="Seki M."/>
            <person name="Sakurai T."/>
            <person name="Satou M."/>
            <person name="Tamse R."/>
            <person name="Vaysberg M."/>
            <person name="Wallender E.K."/>
            <person name="Wong C."/>
            <person name="Yamamura Y."/>
            <person name="Yuan S."/>
            <person name="Shinozaki K."/>
            <person name="Davis R.W."/>
            <person name="Theologis A."/>
            <person name="Ecker J.R."/>
        </authorList>
    </citation>
    <scope>NUCLEOTIDE SEQUENCE [LARGE SCALE MRNA]</scope>
    <source>
        <strain>cv. Columbia</strain>
    </source>
</reference>
<reference key="4">
    <citation type="submission" date="2006-07" db="EMBL/GenBank/DDBJ databases">
        <title>Large-scale analysis of RIKEN Arabidopsis full-length (RAFL) cDNAs.</title>
        <authorList>
            <person name="Totoki Y."/>
            <person name="Seki M."/>
            <person name="Ishida J."/>
            <person name="Nakajima M."/>
            <person name="Enju A."/>
            <person name="Kamiya A."/>
            <person name="Narusaka M."/>
            <person name="Shin-i T."/>
            <person name="Nakagawa M."/>
            <person name="Sakamoto N."/>
            <person name="Oishi K."/>
            <person name="Kohara Y."/>
            <person name="Kobayashi M."/>
            <person name="Toyoda A."/>
            <person name="Sakaki Y."/>
            <person name="Sakurai T."/>
            <person name="Iida K."/>
            <person name="Akiyama K."/>
            <person name="Satou M."/>
            <person name="Toyoda T."/>
            <person name="Konagaya A."/>
            <person name="Carninci P."/>
            <person name="Kawai J."/>
            <person name="Hayashizaki Y."/>
            <person name="Shinozaki K."/>
        </authorList>
    </citation>
    <scope>NUCLEOTIDE SEQUENCE [LARGE SCALE MRNA]</scope>
    <source>
        <strain>cv. Columbia</strain>
    </source>
</reference>
<reference key="5">
    <citation type="submission" date="2001-01" db="EMBL/GenBank/DDBJ databases">
        <title>Molecular and phylogenetic analysis of a gene family in Arabidopsis thaliana with similarities to major latex, pathogenesis-related and ripening-induced proteins.</title>
        <authorList>
            <person name="Muller S."/>
            <person name="Klimt S."/>
            <person name="Hauser M.T."/>
        </authorList>
    </citation>
    <scope>NUCLEOTIDE SEQUENCE [GENOMIC DNA] OF 10-171</scope>
    <source>
        <strain>cv. Columbia</strain>
    </source>
</reference>